<reference key="1">
    <citation type="journal article" date="2011" name="Nature">
        <title>The Medicago genome provides insight into the evolution of rhizobial symbioses.</title>
        <authorList>
            <person name="Young N.D."/>
            <person name="Debelle F."/>
            <person name="Oldroyd G.E.D."/>
            <person name="Geurts R."/>
            <person name="Cannon S.B."/>
            <person name="Udvardi M.K."/>
            <person name="Benedito V.A."/>
            <person name="Mayer K.F.X."/>
            <person name="Gouzy J."/>
            <person name="Schoof H."/>
            <person name="Van de Peer Y."/>
            <person name="Proost S."/>
            <person name="Cook D.R."/>
            <person name="Meyers B.C."/>
            <person name="Spannagl M."/>
            <person name="Cheung F."/>
            <person name="De Mita S."/>
            <person name="Krishnakumar V."/>
            <person name="Gundlach H."/>
            <person name="Zhou S."/>
            <person name="Mudge J."/>
            <person name="Bharti A.K."/>
            <person name="Murray J.D."/>
            <person name="Naoumkina M.A."/>
            <person name="Rosen B."/>
            <person name="Silverstein K.A.T."/>
            <person name="Tang H."/>
            <person name="Rombauts S."/>
            <person name="Zhao P.X."/>
            <person name="Zhou P."/>
            <person name="Barbe V."/>
            <person name="Bardou P."/>
            <person name="Bechner M."/>
            <person name="Bellec A."/>
            <person name="Berger A."/>
            <person name="Berges H."/>
            <person name="Bidwell S."/>
            <person name="Bisseling T."/>
            <person name="Choisne N."/>
            <person name="Couloux A."/>
            <person name="Denny R."/>
            <person name="Deshpande S."/>
            <person name="Dai X."/>
            <person name="Doyle J.J."/>
            <person name="Dudez A.-M."/>
            <person name="Farmer A.D."/>
            <person name="Fouteau S."/>
            <person name="Franken C."/>
            <person name="Gibelin C."/>
            <person name="Gish J."/>
            <person name="Goldstein S."/>
            <person name="Gonzalez A.J."/>
            <person name="Green P.J."/>
            <person name="Hallab A."/>
            <person name="Hartog M."/>
            <person name="Hua A."/>
            <person name="Humphray S.J."/>
            <person name="Jeong D.-H."/>
            <person name="Jing Y."/>
            <person name="Jocker A."/>
            <person name="Kenton S.M."/>
            <person name="Kim D.-J."/>
            <person name="Klee K."/>
            <person name="Lai H."/>
            <person name="Lang C."/>
            <person name="Lin S."/>
            <person name="Macmil S.L."/>
            <person name="Magdelenat G."/>
            <person name="Matthews L."/>
            <person name="McCorrison J."/>
            <person name="Monaghan E.L."/>
            <person name="Mun J.-H."/>
            <person name="Najar F.Z."/>
            <person name="Nicholson C."/>
            <person name="Noirot C."/>
            <person name="O'Bleness M."/>
            <person name="Paule C.R."/>
            <person name="Poulain J."/>
            <person name="Prion F."/>
            <person name="Qin B."/>
            <person name="Qu C."/>
            <person name="Retzel E.F."/>
            <person name="Riddle C."/>
            <person name="Sallet E."/>
            <person name="Samain S."/>
            <person name="Samson N."/>
            <person name="Sanders I."/>
            <person name="Saurat O."/>
            <person name="Scarpelli C."/>
            <person name="Schiex T."/>
            <person name="Segurens B."/>
            <person name="Severin A.J."/>
            <person name="Sherrier D.J."/>
            <person name="Shi R."/>
            <person name="Sims S."/>
            <person name="Singer S.R."/>
            <person name="Sinharoy S."/>
            <person name="Sterck L."/>
            <person name="Viollet A."/>
            <person name="Wang B.-B."/>
            <person name="Wang K."/>
            <person name="Wang M."/>
            <person name="Wang X."/>
            <person name="Warfsmann J."/>
            <person name="Weissenbach J."/>
            <person name="White D.D."/>
            <person name="White J.D."/>
            <person name="Wiley G.B."/>
            <person name="Wincker P."/>
            <person name="Xing Y."/>
            <person name="Yang L."/>
            <person name="Yao Z."/>
            <person name="Ying F."/>
            <person name="Zhai J."/>
            <person name="Zhou L."/>
            <person name="Zuber A."/>
            <person name="Denarie J."/>
            <person name="Dixon R.A."/>
            <person name="May G.D."/>
            <person name="Schwartz D.C."/>
            <person name="Rogers J."/>
            <person name="Quetier F."/>
            <person name="Town C.D."/>
            <person name="Roe B.A."/>
        </authorList>
    </citation>
    <scope>NUCLEOTIDE SEQUENCE [LARGE SCALE GENOMIC DNA]</scope>
    <source>
        <strain>cv. Jemalong A17</strain>
    </source>
</reference>
<reference key="2">
    <citation type="journal article" date="2014" name="BMC Genomics">
        <title>An improved genome release (version Mt4.0) for the model legume Medicago truncatula.</title>
        <authorList>
            <person name="Tang H."/>
            <person name="Krishnakumar V."/>
            <person name="Bidwell S."/>
            <person name="Rosen B."/>
            <person name="Chan A."/>
            <person name="Zhou S."/>
            <person name="Gentzbittel L."/>
            <person name="Childs K.L."/>
            <person name="Yandell M."/>
            <person name="Gundlach H."/>
            <person name="Mayer K.F."/>
            <person name="Schwartz D.C."/>
            <person name="Town C.D."/>
        </authorList>
    </citation>
    <scope>GENOME REANNOTATION</scope>
    <source>
        <strain>cv. Jemalong A17</strain>
    </source>
</reference>
<reference key="3">
    <citation type="journal article" date="2018" name="Nat. Plants">
        <title>Whole-genome landscape of Medicago truncatula symbiotic genes.</title>
        <authorList>
            <person name="Pecrix Y."/>
            <person name="Staton S.E."/>
            <person name="Sallet E."/>
            <person name="Lelandais-Briere C."/>
            <person name="Moreau S."/>
            <person name="Carrere S."/>
            <person name="Blein T."/>
            <person name="Jardinaud M.F."/>
            <person name="Latrasse D."/>
            <person name="Zouine M."/>
            <person name="Zahm M."/>
            <person name="Kreplak J."/>
            <person name="Mayjonade B."/>
            <person name="Satge C."/>
            <person name="Perez M."/>
            <person name="Cauet S."/>
            <person name="Marande W."/>
            <person name="Chantry-Darmon C."/>
            <person name="Lopez-Roques C."/>
            <person name="Bouchez O."/>
            <person name="Berard A."/>
            <person name="Debelle F."/>
            <person name="Munos S."/>
            <person name="Bendahmane A."/>
            <person name="Berges H."/>
            <person name="Niebel A."/>
            <person name="Buitink J."/>
            <person name="Frugier F."/>
            <person name="Benhamed M."/>
            <person name="Crespi M."/>
            <person name="Gouzy J."/>
            <person name="Gamas P."/>
        </authorList>
    </citation>
    <scope>NUCLEOTIDE SEQUENCE [LARGE SCALE GENOMIC DNA]</scope>
    <source>
        <strain>cv. Jemalong A17</strain>
    </source>
</reference>
<reference key="4">
    <citation type="journal article" date="2010" name="Plant Physiol.">
        <title>CLE peptides control Medicago truncatula nodulation locally and systemically.</title>
        <authorList>
            <person name="Mortier V."/>
            <person name="Den Herder G."/>
            <person name="Whitford R."/>
            <person name="Van de Velde W."/>
            <person name="Rombauts S."/>
            <person name="D'Haeseleer K."/>
            <person name="Holsters M."/>
            <person name="Goormachtig S."/>
        </authorList>
    </citation>
    <scope>FUNCTION</scope>
    <scope>TISSUE SPECIFICITY</scope>
    <scope>INDUCTION</scope>
</reference>
<reference key="5">
    <citation type="journal article" date="2012" name="Plant J.">
        <title>Nodule numbers are governed by interaction between CLE peptides and cytokinin signaling.</title>
        <authorList>
            <person name="Mortier V."/>
            <person name="De Wever E."/>
            <person name="Vuylsteke M."/>
            <person name="Holsters M."/>
            <person name="Goormachtig S."/>
        </authorList>
    </citation>
    <scope>FUNCTION</scope>
    <scope>INTERACTION WITH SUNN</scope>
    <scope>INDUCTION</scope>
</reference>
<reference key="6">
    <citation type="journal article" date="2017" name="Plant Physiol.">
        <title>ROOT DETERMINED NODULATION1 is required for M. truncatula CLE12, but not CLE13, peptide signaling through the SUNN receptor kinase.</title>
        <authorList>
            <person name="Kassaw T."/>
            <person name="Nowak S."/>
            <person name="Schnabel E."/>
            <person name="Frugoli J."/>
        </authorList>
    </citation>
    <scope>FUNCTION</scope>
</reference>
<accession>G7JV15</accession>
<comment type="function">
    <molecule>CLE13p</molecule>
    <text evidence="4 5 9">Signaling peptide involved in the regulation of nodulation (PubMed:20348212). Moves from root to shoot to function with the receptor kinase SUNN, in a signaling pathway that plays roles during cellular differentiation, both at the onset of nodulation, and later during nodule meristem development and subsequent homeostasis (PubMed:20348212). Interacts with SUNN signaling to control nodule numbers (PubMed:22168914). SUNN is involved in the autoregulation of nodulation (AON), a long distance systemic signaling from root to shoot and back again, which allows legumes to limit the number of root nodules formed based on available nitrogen and previous rhizobial colonization (Probable).</text>
</comment>
<comment type="subcellular location">
    <molecule>CLE13p</molecule>
    <subcellularLocation>
        <location evidence="8">Secreted</location>
        <location evidence="8">Extracellular space</location>
    </subcellularLocation>
</comment>
<comment type="tissue specificity">
    <molecule>CLE13p</molecule>
    <text evidence="4">Expressed in young nodules throughout the central tissue (PubMed:20348212). Expressed in the apical region of elongated nodules, corresponding to the meristematic and early infection zones (PubMed:20348212).</text>
</comment>
<comment type="induction">
    <molecule>CLE13p</molecule>
    <text evidence="4 5">Induced in roots during nodulation triggered by low nitrogen and infection with Sinorhizobium meliloti (PubMed:20348212, PubMed:22168914). Induced in roots by treatment with the cytokinin 6-benzylaminopurine (BAP) (PubMed:20348212, PubMed:22168914).</text>
</comment>
<comment type="PTM">
    <molecule>CLE13p</molecule>
    <text evidence="1">The O-glycosylation (arabinosylation) of the hydroxyproline Pro-72 enhances binding affinity of the CLE13p peptide for its receptor.</text>
</comment>
<comment type="miscellaneous">
    <text evidence="5 6">Overexpression of CL13 in roots almost abolishes nodule formation when inoculated with Sinorhizobium species (PubMed:22168914, PubMed:28592666). Roots of plants silencing CLE12 and CLE13 exhibit increased number of nodules after infection with Sinorhizobium meliloti (PubMed:22168914).</text>
</comment>
<comment type="similarity">
    <text evidence="8">Belongs to the CLV3/ESR signal peptide family.</text>
</comment>
<feature type="signal peptide" evidence="2">
    <location>
        <begin position="1"/>
        <end position="29"/>
    </location>
</feature>
<feature type="chain" id="PRO_0000448634" description="CLAVATA3/ESR (CLE)-related protein 13">
    <location>
        <begin position="30"/>
        <end position="84"/>
    </location>
</feature>
<feature type="peptide" id="PRO_0000448635" description="CLE13p">
    <location>
        <begin position="65"/>
        <end position="78"/>
    </location>
</feature>
<feature type="region of interest" description="Disordered" evidence="3">
    <location>
        <begin position="57"/>
        <end position="84"/>
    </location>
</feature>
<feature type="modified residue" description="Hydroxyproline" evidence="1">
    <location>
        <position position="69"/>
    </location>
</feature>
<feature type="modified residue" description="Hydroxyproline" evidence="1">
    <location>
        <position position="72"/>
    </location>
</feature>
<feature type="glycosylation site" description="O-linked (Ara...) hydroxyproline" evidence="1">
    <location>
        <position position="72"/>
    </location>
</feature>
<evidence type="ECO:0000250" key="1">
    <source>
        <dbReference type="UniProtKB" id="O49519"/>
    </source>
</evidence>
<evidence type="ECO:0000255" key="2"/>
<evidence type="ECO:0000256" key="3">
    <source>
        <dbReference type="SAM" id="MobiDB-lite"/>
    </source>
</evidence>
<evidence type="ECO:0000269" key="4">
    <source>
    </source>
</evidence>
<evidence type="ECO:0000269" key="5">
    <source>
    </source>
</evidence>
<evidence type="ECO:0000269" key="6">
    <source>
    </source>
</evidence>
<evidence type="ECO:0000303" key="7">
    <source>
    </source>
</evidence>
<evidence type="ECO:0000305" key="8"/>
<evidence type="ECO:0000305" key="9">
    <source>
    </source>
</evidence>
<evidence type="ECO:0000312" key="10">
    <source>
        <dbReference type="EMBL" id="AES89755.1"/>
    </source>
</evidence>
<evidence type="ECO:0000312" key="11">
    <source>
        <dbReference type="EMBL" id="RHN61838.1"/>
    </source>
</evidence>
<keyword id="KW-0217">Developmental protein</keyword>
<keyword id="KW-0221">Differentiation</keyword>
<keyword id="KW-0325">Glycoprotein</keyword>
<keyword id="KW-0379">Hydroxylation</keyword>
<keyword id="KW-1185">Reference proteome</keyword>
<keyword id="KW-0964">Secreted</keyword>
<keyword id="KW-0732">Signal</keyword>
<dbReference type="EMBL" id="CM001220">
    <property type="protein sequence ID" value="AES89755.1"/>
    <property type="molecule type" value="Genomic_DNA"/>
</dbReference>
<dbReference type="EMBL" id="PSQE01000004">
    <property type="protein sequence ID" value="RHN61838.1"/>
    <property type="molecule type" value="Genomic_DNA"/>
</dbReference>
<dbReference type="RefSeq" id="XP_003607558.1">
    <property type="nucleotide sequence ID" value="XM_003607510.2"/>
</dbReference>
<dbReference type="STRING" id="3880.G7JV15"/>
<dbReference type="GlyCosmos" id="G7JV15">
    <property type="glycosylation" value="1 site, No reported glycans"/>
</dbReference>
<dbReference type="PaxDb" id="3880-AES84783"/>
<dbReference type="EnsemblPlants" id="rna24338">
    <property type="protein sequence ID" value="RHN61838.1"/>
    <property type="gene ID" value="gene24338"/>
</dbReference>
<dbReference type="Gramene" id="rna24338">
    <property type="protein sequence ID" value="RHN61838.1"/>
    <property type="gene ID" value="gene24338"/>
</dbReference>
<dbReference type="HOGENOM" id="CLU_154904_0_0_1"/>
<dbReference type="OMA" id="DPQHNGK"/>
<dbReference type="Proteomes" id="UP000002051">
    <property type="component" value="Chromosome 4"/>
</dbReference>
<dbReference type="Proteomes" id="UP000265566">
    <property type="component" value="Chromosome 4"/>
</dbReference>
<dbReference type="GO" id="GO:0005576">
    <property type="term" value="C:extracellular region"/>
    <property type="evidence" value="ECO:0007669"/>
    <property type="project" value="UniProtKB-SubCell"/>
</dbReference>
<dbReference type="GO" id="GO:0030154">
    <property type="term" value="P:cell differentiation"/>
    <property type="evidence" value="ECO:0007669"/>
    <property type="project" value="UniProtKB-KW"/>
</dbReference>
<dbReference type="InterPro" id="IPR039617">
    <property type="entry name" value="CLAVATA3-CLE"/>
</dbReference>
<dbReference type="PANTHER" id="PTHR36016">
    <property type="entry name" value="CLAVATA3/ESR (CLE)-RELATED PROTEIN 7"/>
    <property type="match status" value="1"/>
</dbReference>
<dbReference type="PANTHER" id="PTHR36016:SF1">
    <property type="entry name" value="CLAVATA3_ESR (CLE)-RELATED PROTEIN 5-RELATED"/>
    <property type="match status" value="1"/>
</dbReference>
<protein>
    <recommendedName>
        <fullName evidence="8">CLAVATA3/ESR (CLE)-related protein 13</fullName>
        <shortName evidence="7">MtCLE13</shortName>
    </recommendedName>
    <component>
        <recommendedName>
            <fullName evidence="7">CLE13p</fullName>
        </recommendedName>
    </component>
</protein>
<gene>
    <name evidence="7" type="primary">CLE13</name>
    <name evidence="10" type="ordered locus">MTR_4g079610</name>
    <name evidence="11" type="ORF">MtrunA17_Chr4g0040951</name>
</gene>
<proteinExistence type="evidence at protein level"/>
<organism>
    <name type="scientific">Medicago truncatula</name>
    <name type="common">Barrel medic</name>
    <name type="synonym">Medicago tribuloides</name>
    <dbReference type="NCBI Taxonomy" id="3880"/>
    <lineage>
        <taxon>Eukaryota</taxon>
        <taxon>Viridiplantae</taxon>
        <taxon>Streptophyta</taxon>
        <taxon>Embryophyta</taxon>
        <taxon>Tracheophyta</taxon>
        <taxon>Spermatophyta</taxon>
        <taxon>Magnoliopsida</taxon>
        <taxon>eudicotyledons</taxon>
        <taxon>Gunneridae</taxon>
        <taxon>Pentapetalae</taxon>
        <taxon>rosids</taxon>
        <taxon>fabids</taxon>
        <taxon>Fabales</taxon>
        <taxon>Fabaceae</taxon>
        <taxon>Papilionoideae</taxon>
        <taxon>50 kb inversion clade</taxon>
        <taxon>NPAAA clade</taxon>
        <taxon>Hologalegina</taxon>
        <taxon>IRL clade</taxon>
        <taxon>Trifolieae</taxon>
        <taxon>Medicago</taxon>
    </lineage>
</organism>
<name>CLE13_MEDTR</name>
<sequence>MGRYTTDQVQVYVLVIVLCTFFSTLQARSLRDHPLIHKNIDSRSLLQKLRIHISNHKQVRDISGDRLSPAGPDPQHNGRSPPRK</sequence>